<proteinExistence type="inferred from homology"/>
<sequence length="374" mass="40458">MATKLDYYAVLEVTRDANGDELKKAYRRLAMQYHPDRNPGDASAEARFKEINEAYDILKDEQKRAAYDRFGHAAFEGGGPGAGGFDFGGGLGDIFEQMFGDMMGGRRGGRRSGSDIQIQVSISFTEAFTGVKKPITVPTRVTCESCEGTGSADRDQGAETCPTCHGAGKVRAQQGFFLVERACPTCHGAGKVVRNPCAACHGAGTVERERTLEVAIPAGVEDGTRIRLSGEGEAGGKGAAPGDLYIHVAVEPHPIFQRDGANIYCRVPLRMSLAALGTEIEVPVVDGSRTKVKVPAGTQTGENFRLRGKGFSVLRSSARGDMYIQVSVETPRHLTKRQRELLEEFEAEAGDHERANPESTGFFSKVRDFFEGKL</sequence>
<organism>
    <name type="scientific">Gluconacetobacter diazotrophicus (strain ATCC 49037 / DSM 5601 / CCUG 37298 / CIP 103539 / LMG 7603 / PAl5)</name>
    <dbReference type="NCBI Taxonomy" id="272568"/>
    <lineage>
        <taxon>Bacteria</taxon>
        <taxon>Pseudomonadati</taxon>
        <taxon>Pseudomonadota</taxon>
        <taxon>Alphaproteobacteria</taxon>
        <taxon>Acetobacterales</taxon>
        <taxon>Acetobacteraceae</taxon>
        <taxon>Gluconacetobacter</taxon>
    </lineage>
</organism>
<comment type="function">
    <text evidence="1">Participates actively in the response to hyperosmotic and heat shock by preventing the aggregation of stress-denatured proteins and by disaggregating proteins, also in an autonomous, DnaK-independent fashion. Unfolded proteins bind initially to DnaJ; upon interaction with the DnaJ-bound protein, DnaK hydrolyzes its bound ATP, resulting in the formation of a stable complex. GrpE releases ADP from DnaK; ATP binding to DnaK triggers the release of the substrate protein, thus completing the reaction cycle. Several rounds of ATP-dependent interactions between DnaJ, DnaK and GrpE are required for fully efficient folding. Also involved, together with DnaK and GrpE, in the DNA replication of plasmids through activation of initiation proteins.</text>
</comment>
<comment type="cofactor">
    <cofactor evidence="1">
        <name>Zn(2+)</name>
        <dbReference type="ChEBI" id="CHEBI:29105"/>
    </cofactor>
    <text evidence="1">Binds 2 Zn(2+) ions per monomer.</text>
</comment>
<comment type="subunit">
    <text evidence="1">Homodimer.</text>
</comment>
<comment type="subcellular location">
    <subcellularLocation>
        <location evidence="1">Cytoplasm</location>
    </subcellularLocation>
</comment>
<comment type="domain">
    <text evidence="1">The J domain is necessary and sufficient to stimulate DnaK ATPase activity. Zinc center 1 plays an important role in the autonomous, DnaK-independent chaperone activity of DnaJ. Zinc center 2 is essential for interaction with DnaK and for DnaJ activity.</text>
</comment>
<comment type="similarity">
    <text evidence="1">Belongs to the DnaJ family.</text>
</comment>
<evidence type="ECO:0000255" key="1">
    <source>
        <dbReference type="HAMAP-Rule" id="MF_01152"/>
    </source>
</evidence>
<protein>
    <recommendedName>
        <fullName evidence="1">Chaperone protein DnaJ</fullName>
    </recommendedName>
</protein>
<keyword id="KW-0143">Chaperone</keyword>
<keyword id="KW-0963">Cytoplasm</keyword>
<keyword id="KW-0235">DNA replication</keyword>
<keyword id="KW-0479">Metal-binding</keyword>
<keyword id="KW-1185">Reference proteome</keyword>
<keyword id="KW-0677">Repeat</keyword>
<keyword id="KW-0346">Stress response</keyword>
<keyword id="KW-0862">Zinc</keyword>
<keyword id="KW-0863">Zinc-finger</keyword>
<name>DNAJ_GLUDA</name>
<feature type="chain" id="PRO_1000085200" description="Chaperone protein DnaJ">
    <location>
        <begin position="1"/>
        <end position="374"/>
    </location>
</feature>
<feature type="domain" description="J" evidence="1">
    <location>
        <begin position="6"/>
        <end position="71"/>
    </location>
</feature>
<feature type="repeat" description="CXXCXGXG motif">
    <location>
        <begin position="143"/>
        <end position="150"/>
    </location>
</feature>
<feature type="repeat" description="CXXCXGXG motif">
    <location>
        <begin position="161"/>
        <end position="168"/>
    </location>
</feature>
<feature type="repeat" description="CXXCXGXG motif">
    <location>
        <begin position="183"/>
        <end position="190"/>
    </location>
</feature>
<feature type="repeat" description="CXXCXGXG motif">
    <location>
        <begin position="197"/>
        <end position="204"/>
    </location>
</feature>
<feature type="zinc finger region" description="CR-type" evidence="1">
    <location>
        <begin position="130"/>
        <end position="209"/>
    </location>
</feature>
<feature type="binding site" evidence="1">
    <location>
        <position position="143"/>
    </location>
    <ligand>
        <name>Zn(2+)</name>
        <dbReference type="ChEBI" id="CHEBI:29105"/>
        <label>1</label>
    </ligand>
</feature>
<feature type="binding site" evidence="1">
    <location>
        <position position="146"/>
    </location>
    <ligand>
        <name>Zn(2+)</name>
        <dbReference type="ChEBI" id="CHEBI:29105"/>
        <label>1</label>
    </ligand>
</feature>
<feature type="binding site" evidence="1">
    <location>
        <position position="161"/>
    </location>
    <ligand>
        <name>Zn(2+)</name>
        <dbReference type="ChEBI" id="CHEBI:29105"/>
        <label>2</label>
    </ligand>
</feature>
<feature type="binding site" evidence="1">
    <location>
        <position position="164"/>
    </location>
    <ligand>
        <name>Zn(2+)</name>
        <dbReference type="ChEBI" id="CHEBI:29105"/>
        <label>2</label>
    </ligand>
</feature>
<feature type="binding site" evidence="1">
    <location>
        <position position="183"/>
    </location>
    <ligand>
        <name>Zn(2+)</name>
        <dbReference type="ChEBI" id="CHEBI:29105"/>
        <label>2</label>
    </ligand>
</feature>
<feature type="binding site" evidence="1">
    <location>
        <position position="186"/>
    </location>
    <ligand>
        <name>Zn(2+)</name>
        <dbReference type="ChEBI" id="CHEBI:29105"/>
        <label>2</label>
    </ligand>
</feature>
<feature type="binding site" evidence="1">
    <location>
        <position position="197"/>
    </location>
    <ligand>
        <name>Zn(2+)</name>
        <dbReference type="ChEBI" id="CHEBI:29105"/>
        <label>1</label>
    </ligand>
</feature>
<feature type="binding site" evidence="1">
    <location>
        <position position="200"/>
    </location>
    <ligand>
        <name>Zn(2+)</name>
        <dbReference type="ChEBI" id="CHEBI:29105"/>
        <label>1</label>
    </ligand>
</feature>
<reference key="1">
    <citation type="journal article" date="2009" name="BMC Genomics">
        <title>Complete genome sequence of the sugarcane nitrogen-fixing endophyte Gluconacetobacter diazotrophicus Pal5.</title>
        <authorList>
            <person name="Bertalan M."/>
            <person name="Albano R."/>
            <person name="de Padua V."/>
            <person name="Rouws L."/>
            <person name="Rojas C."/>
            <person name="Hemerly A."/>
            <person name="Teixeira K."/>
            <person name="Schwab S."/>
            <person name="Araujo J."/>
            <person name="Oliveira A."/>
            <person name="Franca L."/>
            <person name="Magalhaes V."/>
            <person name="Alqueres S."/>
            <person name="Cardoso A."/>
            <person name="Almeida W."/>
            <person name="Loureiro M.M."/>
            <person name="Nogueira E."/>
            <person name="Cidade D."/>
            <person name="Oliveira D."/>
            <person name="Simao T."/>
            <person name="Macedo J."/>
            <person name="Valadao A."/>
            <person name="Dreschsel M."/>
            <person name="Freitas F."/>
            <person name="Vidal M."/>
            <person name="Guedes H."/>
            <person name="Rodrigues E."/>
            <person name="Meneses C."/>
            <person name="Brioso P."/>
            <person name="Pozzer L."/>
            <person name="Figueiredo D."/>
            <person name="Montano H."/>
            <person name="Junior J."/>
            <person name="de Souza Filho G."/>
            <person name="Martin Quintana Flores V."/>
            <person name="Ferreira B."/>
            <person name="Branco A."/>
            <person name="Gonzalez P."/>
            <person name="Guillobel H."/>
            <person name="Lemos M."/>
            <person name="Seibel L."/>
            <person name="Macedo J."/>
            <person name="Alves-Ferreira M."/>
            <person name="Sachetto-Martins G."/>
            <person name="Coelho A."/>
            <person name="Santos E."/>
            <person name="Amaral G."/>
            <person name="Neves A."/>
            <person name="Pacheco A.B."/>
            <person name="Carvalho D."/>
            <person name="Lery L."/>
            <person name="Bisch P."/>
            <person name="Rossle S.C."/>
            <person name="Urmenyi T."/>
            <person name="Rael Pereira A."/>
            <person name="Silva R."/>
            <person name="Rondinelli E."/>
            <person name="von Kruger W."/>
            <person name="Martins O."/>
            <person name="Baldani J.I."/>
            <person name="Ferreira P.C."/>
        </authorList>
    </citation>
    <scope>NUCLEOTIDE SEQUENCE [LARGE SCALE GENOMIC DNA]</scope>
    <source>
        <strain>ATCC 49037 / DSM 5601 / CCUG 37298 / CIP 103539 / LMG 7603 / PAl5</strain>
    </source>
</reference>
<reference key="2">
    <citation type="journal article" date="2010" name="Stand. Genomic Sci.">
        <title>Two genome sequences of the same bacterial strain, Gluconacetobacter diazotrophicus PAl 5, suggest a new standard in genome sequence submission.</title>
        <authorList>
            <person name="Giongo A."/>
            <person name="Tyler H.L."/>
            <person name="Zipperer U.N."/>
            <person name="Triplett E.W."/>
        </authorList>
    </citation>
    <scope>NUCLEOTIDE SEQUENCE [LARGE SCALE GENOMIC DNA]</scope>
    <source>
        <strain>ATCC 49037 / DSM 5601 / CCUG 37298 / CIP 103539 / LMG 7603 / PAl5</strain>
    </source>
</reference>
<dbReference type="EMBL" id="AM889285">
    <property type="protein sequence ID" value="CAP55204.1"/>
    <property type="molecule type" value="Genomic_DNA"/>
</dbReference>
<dbReference type="EMBL" id="CP001189">
    <property type="protein sequence ID" value="ACI51732.1"/>
    <property type="molecule type" value="Genomic_DNA"/>
</dbReference>
<dbReference type="RefSeq" id="WP_012224431.1">
    <property type="nucleotide sequence ID" value="NC_010125.1"/>
</dbReference>
<dbReference type="SMR" id="A9HEA1"/>
<dbReference type="STRING" id="272568.GDI1261"/>
<dbReference type="KEGG" id="gdi:GDI1261"/>
<dbReference type="KEGG" id="gdj:Gdia_1972"/>
<dbReference type="eggNOG" id="COG0484">
    <property type="taxonomic scope" value="Bacteria"/>
</dbReference>
<dbReference type="HOGENOM" id="CLU_017633_0_7_5"/>
<dbReference type="OrthoDB" id="9779889at2"/>
<dbReference type="Proteomes" id="UP000001176">
    <property type="component" value="Chromosome"/>
</dbReference>
<dbReference type="GO" id="GO:0005737">
    <property type="term" value="C:cytoplasm"/>
    <property type="evidence" value="ECO:0007669"/>
    <property type="project" value="UniProtKB-SubCell"/>
</dbReference>
<dbReference type="GO" id="GO:0005524">
    <property type="term" value="F:ATP binding"/>
    <property type="evidence" value="ECO:0007669"/>
    <property type="project" value="InterPro"/>
</dbReference>
<dbReference type="GO" id="GO:0031072">
    <property type="term" value="F:heat shock protein binding"/>
    <property type="evidence" value="ECO:0007669"/>
    <property type="project" value="InterPro"/>
</dbReference>
<dbReference type="GO" id="GO:0051082">
    <property type="term" value="F:unfolded protein binding"/>
    <property type="evidence" value="ECO:0007669"/>
    <property type="project" value="UniProtKB-UniRule"/>
</dbReference>
<dbReference type="GO" id="GO:0008270">
    <property type="term" value="F:zinc ion binding"/>
    <property type="evidence" value="ECO:0007669"/>
    <property type="project" value="UniProtKB-UniRule"/>
</dbReference>
<dbReference type="GO" id="GO:0051085">
    <property type="term" value="P:chaperone cofactor-dependent protein refolding"/>
    <property type="evidence" value="ECO:0007669"/>
    <property type="project" value="TreeGrafter"/>
</dbReference>
<dbReference type="GO" id="GO:0006260">
    <property type="term" value="P:DNA replication"/>
    <property type="evidence" value="ECO:0007669"/>
    <property type="project" value="UniProtKB-KW"/>
</dbReference>
<dbReference type="GO" id="GO:0042026">
    <property type="term" value="P:protein refolding"/>
    <property type="evidence" value="ECO:0007669"/>
    <property type="project" value="TreeGrafter"/>
</dbReference>
<dbReference type="GO" id="GO:0009408">
    <property type="term" value="P:response to heat"/>
    <property type="evidence" value="ECO:0007669"/>
    <property type="project" value="InterPro"/>
</dbReference>
<dbReference type="CDD" id="cd06257">
    <property type="entry name" value="DnaJ"/>
    <property type="match status" value="1"/>
</dbReference>
<dbReference type="CDD" id="cd10747">
    <property type="entry name" value="DnaJ_C"/>
    <property type="match status" value="1"/>
</dbReference>
<dbReference type="CDD" id="cd10719">
    <property type="entry name" value="DnaJ_zf"/>
    <property type="match status" value="1"/>
</dbReference>
<dbReference type="FunFam" id="1.10.287.110:FF:000034">
    <property type="entry name" value="Chaperone protein DnaJ"/>
    <property type="match status" value="1"/>
</dbReference>
<dbReference type="FunFam" id="2.10.230.10:FF:000002">
    <property type="entry name" value="Molecular chaperone DnaJ"/>
    <property type="match status" value="1"/>
</dbReference>
<dbReference type="FunFam" id="2.60.260.20:FF:000004">
    <property type="entry name" value="Molecular chaperone DnaJ"/>
    <property type="match status" value="1"/>
</dbReference>
<dbReference type="Gene3D" id="6.20.20.10">
    <property type="match status" value="2"/>
</dbReference>
<dbReference type="Gene3D" id="1.10.287.110">
    <property type="entry name" value="DnaJ domain"/>
    <property type="match status" value="1"/>
</dbReference>
<dbReference type="Gene3D" id="2.60.260.20">
    <property type="entry name" value="Urease metallochaperone UreE, N-terminal domain"/>
    <property type="match status" value="2"/>
</dbReference>
<dbReference type="HAMAP" id="MF_01152">
    <property type="entry name" value="DnaJ"/>
    <property type="match status" value="1"/>
</dbReference>
<dbReference type="InterPro" id="IPR012724">
    <property type="entry name" value="DnaJ"/>
</dbReference>
<dbReference type="InterPro" id="IPR002939">
    <property type="entry name" value="DnaJ_C"/>
</dbReference>
<dbReference type="InterPro" id="IPR001623">
    <property type="entry name" value="DnaJ_domain"/>
</dbReference>
<dbReference type="InterPro" id="IPR018253">
    <property type="entry name" value="DnaJ_domain_CS"/>
</dbReference>
<dbReference type="InterPro" id="IPR008971">
    <property type="entry name" value="HSP40/DnaJ_pept-bd"/>
</dbReference>
<dbReference type="InterPro" id="IPR001305">
    <property type="entry name" value="HSP_DnaJ_Cys-rich_dom"/>
</dbReference>
<dbReference type="InterPro" id="IPR036410">
    <property type="entry name" value="HSP_DnaJ_Cys-rich_dom_sf"/>
</dbReference>
<dbReference type="InterPro" id="IPR036869">
    <property type="entry name" value="J_dom_sf"/>
</dbReference>
<dbReference type="NCBIfam" id="TIGR02349">
    <property type="entry name" value="DnaJ_bact"/>
    <property type="match status" value="1"/>
</dbReference>
<dbReference type="NCBIfam" id="NF008035">
    <property type="entry name" value="PRK10767.1"/>
    <property type="match status" value="1"/>
</dbReference>
<dbReference type="PANTHER" id="PTHR43096:SF48">
    <property type="entry name" value="CHAPERONE PROTEIN DNAJ"/>
    <property type="match status" value="1"/>
</dbReference>
<dbReference type="PANTHER" id="PTHR43096">
    <property type="entry name" value="DNAJ HOMOLOG 1, MITOCHONDRIAL-RELATED"/>
    <property type="match status" value="1"/>
</dbReference>
<dbReference type="Pfam" id="PF00226">
    <property type="entry name" value="DnaJ"/>
    <property type="match status" value="1"/>
</dbReference>
<dbReference type="Pfam" id="PF01556">
    <property type="entry name" value="DnaJ_C"/>
    <property type="match status" value="1"/>
</dbReference>
<dbReference type="Pfam" id="PF00684">
    <property type="entry name" value="DnaJ_CXXCXGXG"/>
    <property type="match status" value="1"/>
</dbReference>
<dbReference type="PRINTS" id="PR00625">
    <property type="entry name" value="JDOMAIN"/>
</dbReference>
<dbReference type="SMART" id="SM00271">
    <property type="entry name" value="DnaJ"/>
    <property type="match status" value="1"/>
</dbReference>
<dbReference type="SUPFAM" id="SSF46565">
    <property type="entry name" value="Chaperone J-domain"/>
    <property type="match status" value="1"/>
</dbReference>
<dbReference type="SUPFAM" id="SSF57938">
    <property type="entry name" value="DnaJ/Hsp40 cysteine-rich domain"/>
    <property type="match status" value="1"/>
</dbReference>
<dbReference type="SUPFAM" id="SSF49493">
    <property type="entry name" value="HSP40/DnaJ peptide-binding domain"/>
    <property type="match status" value="2"/>
</dbReference>
<dbReference type="PROSITE" id="PS00636">
    <property type="entry name" value="DNAJ_1"/>
    <property type="match status" value="1"/>
</dbReference>
<dbReference type="PROSITE" id="PS50076">
    <property type="entry name" value="DNAJ_2"/>
    <property type="match status" value="1"/>
</dbReference>
<dbReference type="PROSITE" id="PS51188">
    <property type="entry name" value="ZF_CR"/>
    <property type="match status" value="1"/>
</dbReference>
<accession>A9HEA1</accession>
<accession>B5ZCS4</accession>
<gene>
    <name evidence="1" type="primary">dnaJ</name>
    <name type="ordered locus">GDI1261</name>
    <name type="ordered locus">Gdia_1972</name>
</gene>